<feature type="chain" id="PRO_0000329961" description="Signal peptidase complex subunit 3">
    <location>
        <begin position="1"/>
        <end position="170"/>
    </location>
</feature>
<feature type="topological domain" description="Cytoplasmic" evidence="1">
    <location>
        <begin position="1"/>
        <end position="7"/>
    </location>
</feature>
<feature type="transmembrane region" description="Helical; Signal-anchor for type II membrane protein" evidence="5">
    <location>
        <begin position="8"/>
        <end position="28"/>
    </location>
</feature>
<feature type="topological domain" description="Lumenal" evidence="1">
    <location>
        <begin position="29"/>
        <end position="170"/>
    </location>
</feature>
<feature type="glycosylation site" description="N-linked (GlcNAc...) asparagine" evidence="5">
    <location>
        <position position="131"/>
    </location>
</feature>
<evidence type="ECO:0000250" key="1">
    <source>
        <dbReference type="UniProtKB" id="P61008"/>
    </source>
</evidence>
<evidence type="ECO:0000250" key="2">
    <source>
        <dbReference type="UniProtKB" id="P61009"/>
    </source>
</evidence>
<evidence type="ECO:0000250" key="3">
    <source>
        <dbReference type="UniProtKB" id="Q12133"/>
    </source>
</evidence>
<evidence type="ECO:0000250" key="4">
    <source>
        <dbReference type="UniProtKB" id="Q9Y6A9"/>
    </source>
</evidence>
<evidence type="ECO:0000255" key="5"/>
<evidence type="ECO:0000305" key="6"/>
<accession>B0G180</accession>
<dbReference type="EMBL" id="AAFI02000171">
    <property type="protein sequence ID" value="EDR41028.1"/>
    <property type="molecule type" value="Genomic_DNA"/>
</dbReference>
<dbReference type="RefSeq" id="XP_001733043.1">
    <property type="nucleotide sequence ID" value="XM_001732991.1"/>
</dbReference>
<dbReference type="SMR" id="B0G180"/>
<dbReference type="FunCoup" id="B0G180">
    <property type="interactions" value="374"/>
</dbReference>
<dbReference type="STRING" id="44689.B0G180"/>
<dbReference type="GlyCosmos" id="B0G180">
    <property type="glycosylation" value="1 site, No reported glycans"/>
</dbReference>
<dbReference type="GlyGen" id="B0G180">
    <property type="glycosylation" value="1 site"/>
</dbReference>
<dbReference type="PaxDb" id="44689-DDB0237789"/>
<dbReference type="EnsemblProtists" id="EDR41028">
    <property type="protein sequence ID" value="EDR41028"/>
    <property type="gene ID" value="DDB_G0290851"/>
</dbReference>
<dbReference type="GeneID" id="8627862"/>
<dbReference type="KEGG" id="ddi:DDB_G0290851"/>
<dbReference type="dictyBase" id="DDB_G0290851">
    <property type="gene designation" value="spc3"/>
</dbReference>
<dbReference type="VEuPathDB" id="AmoebaDB:DDB_G0290851"/>
<dbReference type="eggNOG" id="KOG3372">
    <property type="taxonomic scope" value="Eukaryota"/>
</dbReference>
<dbReference type="HOGENOM" id="CLU_068714_1_0_1"/>
<dbReference type="InParanoid" id="B0G180"/>
<dbReference type="OMA" id="FWDDGHG"/>
<dbReference type="PhylomeDB" id="B0G180"/>
<dbReference type="PRO" id="PR:B0G180"/>
<dbReference type="Proteomes" id="UP000002195">
    <property type="component" value="Chromosome 5"/>
</dbReference>
<dbReference type="GO" id="GO:0005787">
    <property type="term" value="C:signal peptidase complex"/>
    <property type="evidence" value="ECO:0000318"/>
    <property type="project" value="GO_Central"/>
</dbReference>
<dbReference type="GO" id="GO:0045047">
    <property type="term" value="P:protein targeting to ER"/>
    <property type="evidence" value="ECO:0000318"/>
    <property type="project" value="GO_Central"/>
</dbReference>
<dbReference type="GO" id="GO:0006465">
    <property type="term" value="P:signal peptide processing"/>
    <property type="evidence" value="ECO:0000318"/>
    <property type="project" value="GO_Central"/>
</dbReference>
<dbReference type="InterPro" id="IPR007653">
    <property type="entry name" value="SPC3"/>
</dbReference>
<dbReference type="PANTHER" id="PTHR12804">
    <property type="entry name" value="MICROSOMAL SIGNAL PEPTIDASE 23 KD SUBUNIT SPC22/23"/>
    <property type="match status" value="1"/>
</dbReference>
<dbReference type="PANTHER" id="PTHR12804:SF0">
    <property type="entry name" value="SIGNAL PEPTIDASE COMPLEX SUBUNIT 3"/>
    <property type="match status" value="1"/>
</dbReference>
<dbReference type="Pfam" id="PF04573">
    <property type="entry name" value="SPC22"/>
    <property type="match status" value="1"/>
</dbReference>
<dbReference type="PIRSF" id="PIRSF016089">
    <property type="entry name" value="SPC22"/>
    <property type="match status" value="1"/>
</dbReference>
<gene>
    <name type="primary">spcs3</name>
    <name type="synonym">spc3</name>
    <name type="ORF">DDB_G0290851</name>
</gene>
<reference key="1">
    <citation type="journal article" date="2005" name="Nature">
        <title>The genome of the social amoeba Dictyostelium discoideum.</title>
        <authorList>
            <person name="Eichinger L."/>
            <person name="Pachebat J.A."/>
            <person name="Gloeckner G."/>
            <person name="Rajandream M.A."/>
            <person name="Sucgang R."/>
            <person name="Berriman M."/>
            <person name="Song J."/>
            <person name="Olsen R."/>
            <person name="Szafranski K."/>
            <person name="Xu Q."/>
            <person name="Tunggal B."/>
            <person name="Kummerfeld S."/>
            <person name="Madera M."/>
            <person name="Konfortov B.A."/>
            <person name="Rivero F."/>
            <person name="Bankier A.T."/>
            <person name="Lehmann R."/>
            <person name="Hamlin N."/>
            <person name="Davies R."/>
            <person name="Gaudet P."/>
            <person name="Fey P."/>
            <person name="Pilcher K."/>
            <person name="Chen G."/>
            <person name="Saunders D."/>
            <person name="Sodergren E.J."/>
            <person name="Davis P."/>
            <person name="Kerhornou A."/>
            <person name="Nie X."/>
            <person name="Hall N."/>
            <person name="Anjard C."/>
            <person name="Hemphill L."/>
            <person name="Bason N."/>
            <person name="Farbrother P."/>
            <person name="Desany B."/>
            <person name="Just E."/>
            <person name="Morio T."/>
            <person name="Rost R."/>
            <person name="Churcher C.M."/>
            <person name="Cooper J."/>
            <person name="Haydock S."/>
            <person name="van Driessche N."/>
            <person name="Cronin A."/>
            <person name="Goodhead I."/>
            <person name="Muzny D.M."/>
            <person name="Mourier T."/>
            <person name="Pain A."/>
            <person name="Lu M."/>
            <person name="Harper D."/>
            <person name="Lindsay R."/>
            <person name="Hauser H."/>
            <person name="James K.D."/>
            <person name="Quiles M."/>
            <person name="Madan Babu M."/>
            <person name="Saito T."/>
            <person name="Buchrieser C."/>
            <person name="Wardroper A."/>
            <person name="Felder M."/>
            <person name="Thangavelu M."/>
            <person name="Johnson D."/>
            <person name="Knights A."/>
            <person name="Loulseged H."/>
            <person name="Mungall K.L."/>
            <person name="Oliver K."/>
            <person name="Price C."/>
            <person name="Quail M.A."/>
            <person name="Urushihara H."/>
            <person name="Hernandez J."/>
            <person name="Rabbinowitsch E."/>
            <person name="Steffen D."/>
            <person name="Sanders M."/>
            <person name="Ma J."/>
            <person name="Kohara Y."/>
            <person name="Sharp S."/>
            <person name="Simmonds M.N."/>
            <person name="Spiegler S."/>
            <person name="Tivey A."/>
            <person name="Sugano S."/>
            <person name="White B."/>
            <person name="Walker D."/>
            <person name="Woodward J.R."/>
            <person name="Winckler T."/>
            <person name="Tanaka Y."/>
            <person name="Shaulsky G."/>
            <person name="Schleicher M."/>
            <person name="Weinstock G.M."/>
            <person name="Rosenthal A."/>
            <person name="Cox E.C."/>
            <person name="Chisholm R.L."/>
            <person name="Gibbs R.A."/>
            <person name="Loomis W.F."/>
            <person name="Platzer M."/>
            <person name="Kay R.R."/>
            <person name="Williams J.G."/>
            <person name="Dear P.H."/>
            <person name="Noegel A.A."/>
            <person name="Barrell B.G."/>
            <person name="Kuspa A."/>
        </authorList>
    </citation>
    <scope>NUCLEOTIDE SEQUENCE [LARGE SCALE GENOMIC DNA]</scope>
    <source>
        <strain>AX4</strain>
    </source>
</reference>
<organism>
    <name type="scientific">Dictyostelium discoideum</name>
    <name type="common">Social amoeba</name>
    <dbReference type="NCBI Taxonomy" id="44689"/>
    <lineage>
        <taxon>Eukaryota</taxon>
        <taxon>Amoebozoa</taxon>
        <taxon>Evosea</taxon>
        <taxon>Eumycetozoa</taxon>
        <taxon>Dictyostelia</taxon>
        <taxon>Dictyosteliales</taxon>
        <taxon>Dictyosteliaceae</taxon>
        <taxon>Dictyostelium</taxon>
    </lineage>
</organism>
<name>SPCS3_DICDI</name>
<proteinExistence type="inferred from homology"/>
<sequence length="170" mass="19672">MHSLSQRANTIVCFGGIVLVGVLLLNVLSRAFFSDHVDVDIKLNEIHRFNTQRNFEYSFISIDLDANLEPLFNWNTKMLFLYVTAEYRTKQNVLSQVVVWDHILTEKSKANIHEKRLSKYPIINQGLGLKNNTIKLTFNYNVVPISGILTRHQVGTSEFKFPTTYMKEAY</sequence>
<protein>
    <recommendedName>
        <fullName>Signal peptidase complex subunit 3</fullName>
    </recommendedName>
</protein>
<comment type="function">
    <text evidence="2 3">Essential component of the signal peptidase complex (SPC) which catalyzes the cleavage of N-terminal signal sequences from nascent proteins as they are translocated into the lumen of the endoplasmic reticulum (By similarity). Essential for the SPC catalytic activity, possibly by stabilizing and positioning the active center of the complex close to the lumenal surface (By similarity).</text>
</comment>
<comment type="subunit">
    <text evidence="4">Component of the signal peptidase complex (SPC) composed of a catalytic subunit sec11 and three accessory subunits spcs1, spcs2 and spcs3. The complex induces a local thinning of the ER membrane which is used to measure the length of the signal peptide (SP) h-region of protein substrates. This ensures the selectivity of the complex towards h-regions shorter than 18-20 amino acids.</text>
</comment>
<comment type="subcellular location">
    <subcellularLocation>
        <location evidence="1">Endoplasmic reticulum membrane</location>
        <topology evidence="1">Single-pass type II membrane protein</topology>
    </subcellularLocation>
</comment>
<comment type="similarity">
    <text evidence="6">Belongs to the SPCS3 family.</text>
</comment>
<keyword id="KW-0256">Endoplasmic reticulum</keyword>
<keyword id="KW-0325">Glycoprotein</keyword>
<keyword id="KW-0472">Membrane</keyword>
<keyword id="KW-1185">Reference proteome</keyword>
<keyword id="KW-0735">Signal-anchor</keyword>
<keyword id="KW-0812">Transmembrane</keyword>
<keyword id="KW-1133">Transmembrane helix</keyword>